<evidence type="ECO:0000255" key="1">
    <source>
        <dbReference type="HAMAP-Rule" id="MF_00233"/>
    </source>
</evidence>
<evidence type="ECO:0000305" key="2"/>
<dbReference type="EMBL" id="AM286280">
    <property type="protein sequence ID" value="CAL08286.1"/>
    <property type="status" value="ALT_INIT"/>
    <property type="molecule type" value="Genomic_DNA"/>
</dbReference>
<dbReference type="SMR" id="Q14JH2"/>
<dbReference type="KEGG" id="ftf:FTF0270"/>
<dbReference type="HOGENOM" id="CLU_092816_2_1_6"/>
<dbReference type="GO" id="GO:0009279">
    <property type="term" value="C:cell outer membrane"/>
    <property type="evidence" value="ECO:0007669"/>
    <property type="project" value="UniProtKB-SubCell"/>
</dbReference>
<dbReference type="GO" id="GO:0044874">
    <property type="term" value="P:lipoprotein localization to outer membrane"/>
    <property type="evidence" value="ECO:0007669"/>
    <property type="project" value="UniProtKB-UniRule"/>
</dbReference>
<dbReference type="GO" id="GO:0015031">
    <property type="term" value="P:protein transport"/>
    <property type="evidence" value="ECO:0007669"/>
    <property type="project" value="UniProtKB-KW"/>
</dbReference>
<dbReference type="CDD" id="cd16326">
    <property type="entry name" value="LolB"/>
    <property type="match status" value="1"/>
</dbReference>
<dbReference type="Gene3D" id="2.50.20.10">
    <property type="entry name" value="Lipoprotein localisation LolA/LolB/LppX"/>
    <property type="match status" value="1"/>
</dbReference>
<dbReference type="HAMAP" id="MF_00233">
    <property type="entry name" value="LolB"/>
    <property type="match status" value="1"/>
</dbReference>
<dbReference type="InterPro" id="IPR029046">
    <property type="entry name" value="LolA/LolB/LppX"/>
</dbReference>
<dbReference type="InterPro" id="IPR004565">
    <property type="entry name" value="OM_lipoprot_LolB"/>
</dbReference>
<dbReference type="NCBIfam" id="TIGR00548">
    <property type="entry name" value="lolB"/>
    <property type="match status" value="1"/>
</dbReference>
<dbReference type="Pfam" id="PF03550">
    <property type="entry name" value="LolB"/>
    <property type="match status" value="1"/>
</dbReference>
<dbReference type="SUPFAM" id="SSF89392">
    <property type="entry name" value="Prokaryotic lipoproteins and lipoprotein localization factors"/>
    <property type="match status" value="1"/>
</dbReference>
<dbReference type="PROSITE" id="PS51257">
    <property type="entry name" value="PROKAR_LIPOPROTEIN"/>
    <property type="match status" value="1"/>
</dbReference>
<comment type="function">
    <text evidence="1">Plays a critical role in the incorporation of lipoproteins in the outer membrane after they are released by the LolA protein.</text>
</comment>
<comment type="subunit">
    <text evidence="1">Monomer.</text>
</comment>
<comment type="subcellular location">
    <subcellularLocation>
        <location evidence="1">Cell outer membrane</location>
        <topology evidence="1">Lipid-anchor</topology>
    </subcellularLocation>
</comment>
<comment type="similarity">
    <text evidence="1">Belongs to the LolB family.</text>
</comment>
<comment type="sequence caution" evidence="2">
    <conflict type="erroneous initiation">
        <sequence resource="EMBL-CDS" id="CAL08286"/>
    </conflict>
</comment>
<accession>Q14JH2</accession>
<protein>
    <recommendedName>
        <fullName evidence="1">Outer-membrane lipoprotein LolB</fullName>
    </recommendedName>
</protein>
<name>LOLB_FRAT1</name>
<keyword id="KW-0998">Cell outer membrane</keyword>
<keyword id="KW-0143">Chaperone</keyword>
<keyword id="KW-0449">Lipoprotein</keyword>
<keyword id="KW-0472">Membrane</keyword>
<keyword id="KW-0564">Palmitate</keyword>
<keyword id="KW-0653">Protein transport</keyword>
<keyword id="KW-0732">Signal</keyword>
<keyword id="KW-0813">Transport</keyword>
<proteinExistence type="inferred from homology"/>
<sequence>MSKLKIDTKRRFSLLIALVLIISLSSCATTQTNVTTKTVFNQETTYHNLLKLKKWQANGVIGIIYDNQAESANYTYLQDGDNFSIKLYGPLGIGSIEIKGDTNSVLLANSKGQKLTAKDAKTLMLEQLGWYVPVEGLKYWIKAIAIPNIRQTSELNTNNLLSKLSQNGWSISYSNYQLVDSKYPLPTKIRMSRDNLTLKIVIKSWQI</sequence>
<gene>
    <name evidence="1" type="primary">lolB</name>
    <name type="ordered locus">FTF0270</name>
</gene>
<feature type="signal peptide" evidence="1">
    <location>
        <begin position="1"/>
        <end position="26"/>
    </location>
</feature>
<feature type="chain" id="PRO_0000336605" description="Outer-membrane lipoprotein LolB">
    <location>
        <begin position="27"/>
        <end position="207"/>
    </location>
</feature>
<feature type="lipid moiety-binding region" description="N-palmitoyl cysteine" evidence="1">
    <location>
        <position position="27"/>
    </location>
</feature>
<feature type="lipid moiety-binding region" description="S-diacylglycerol cysteine" evidence="1">
    <location>
        <position position="27"/>
    </location>
</feature>
<organism>
    <name type="scientific">Francisella tularensis subsp. tularensis (strain FSC 198)</name>
    <dbReference type="NCBI Taxonomy" id="393115"/>
    <lineage>
        <taxon>Bacteria</taxon>
        <taxon>Pseudomonadati</taxon>
        <taxon>Pseudomonadota</taxon>
        <taxon>Gammaproteobacteria</taxon>
        <taxon>Thiotrichales</taxon>
        <taxon>Francisellaceae</taxon>
        <taxon>Francisella</taxon>
    </lineage>
</organism>
<reference key="1">
    <citation type="journal article" date="2007" name="PLoS ONE">
        <title>Genome sequencing shows that European isolates of Francisella tularensis subspecies tularensis are almost identical to US laboratory strain Schu S4.</title>
        <authorList>
            <person name="Chaudhuri R.R."/>
            <person name="Ren C.-P."/>
            <person name="Desmond L."/>
            <person name="Vincent G.A."/>
            <person name="Silman N.J."/>
            <person name="Brehm J.K."/>
            <person name="Elmore M.J."/>
            <person name="Hudson M.J."/>
            <person name="Forsman M."/>
            <person name="Isherwood K.E."/>
            <person name="Gurycova D."/>
            <person name="Minton N.P."/>
            <person name="Titball R.W."/>
            <person name="Pallen M.J."/>
            <person name="Vipond R."/>
        </authorList>
    </citation>
    <scope>NUCLEOTIDE SEQUENCE [LARGE SCALE GENOMIC DNA]</scope>
    <source>
        <strain>FSC 198</strain>
    </source>
</reference>